<protein>
    <recommendedName>
        <fullName evidence="1">Replication factor C small subunit 1</fullName>
        <shortName evidence="1">RFC small subunit 1</shortName>
    </recommendedName>
    <alternativeName>
        <fullName evidence="1">Clamp loader small subunit 1</fullName>
    </alternativeName>
</protein>
<evidence type="ECO:0000255" key="1">
    <source>
        <dbReference type="HAMAP-Rule" id="MF_01509"/>
    </source>
</evidence>
<sequence>MAELFWFEKYRPRSFDEVVDLEEVKARLREFVRGGNMPHLLFYGPPGTGKTTMALVLARELYGEYWRENTLELNASDERGINVIRERVKEFARTAPVGKAPFKLVILDEADNMTSDAQQALRRIMEMYAQNTRFILLANYVSRIIDPIISRCAVFRFSPMPRSLMAERLRHIAKSEGIELRDDAIDLIYEVSEGDMRKAINLLQVAAATSKVVDANAVASATTMIRPADVVELFNLAFNGDVTKAREKLRELMYVKGIAGIDFIRAFQRELIRMPLDDEVKAEIAELLAEVDYRLTQGSDEELQLLYLLSKLGAIGKRARQTPPPSKRR</sequence>
<feature type="chain" id="PRO_0000296651" description="Replication factor C small subunit 1">
    <location>
        <begin position="1"/>
        <end position="329"/>
    </location>
</feature>
<feature type="binding site" evidence="1">
    <location>
        <begin position="44"/>
        <end position="51"/>
    </location>
    <ligand>
        <name>ATP</name>
        <dbReference type="ChEBI" id="CHEBI:30616"/>
    </ligand>
</feature>
<name>RFCS1_PYRAR</name>
<comment type="function">
    <text evidence="1">Part of the RFC clamp loader complex which loads the PCNA sliding clamp onto DNA.</text>
</comment>
<comment type="subunit">
    <text evidence="1">Heteromultimer composed of small subunits (RfcS) and large subunits (RfcL).</text>
</comment>
<comment type="similarity">
    <text evidence="1">Belongs to the activator 1 small subunits family. RfcS subfamily.</text>
</comment>
<accession>A4WGV2</accession>
<keyword id="KW-0067">ATP-binding</keyword>
<keyword id="KW-0235">DNA replication</keyword>
<keyword id="KW-0547">Nucleotide-binding</keyword>
<dbReference type="EMBL" id="CP000660">
    <property type="protein sequence ID" value="ABP49619.1"/>
    <property type="molecule type" value="Genomic_DNA"/>
</dbReference>
<dbReference type="SMR" id="A4WGV2"/>
<dbReference type="STRING" id="340102.Pars_0002"/>
<dbReference type="KEGG" id="pas:Pars_0002"/>
<dbReference type="HOGENOM" id="CLU_042324_2_1_2"/>
<dbReference type="OrthoDB" id="7928at2157"/>
<dbReference type="PhylomeDB" id="A4WGV2"/>
<dbReference type="Proteomes" id="UP000001567">
    <property type="component" value="Chromosome"/>
</dbReference>
<dbReference type="GO" id="GO:0005663">
    <property type="term" value="C:DNA replication factor C complex"/>
    <property type="evidence" value="ECO:0007669"/>
    <property type="project" value="InterPro"/>
</dbReference>
<dbReference type="GO" id="GO:0005524">
    <property type="term" value="F:ATP binding"/>
    <property type="evidence" value="ECO:0007669"/>
    <property type="project" value="UniProtKB-UniRule"/>
</dbReference>
<dbReference type="GO" id="GO:0016887">
    <property type="term" value="F:ATP hydrolysis activity"/>
    <property type="evidence" value="ECO:0007669"/>
    <property type="project" value="InterPro"/>
</dbReference>
<dbReference type="GO" id="GO:0003677">
    <property type="term" value="F:DNA binding"/>
    <property type="evidence" value="ECO:0007669"/>
    <property type="project" value="InterPro"/>
</dbReference>
<dbReference type="GO" id="GO:0003689">
    <property type="term" value="F:DNA clamp loader activity"/>
    <property type="evidence" value="ECO:0007669"/>
    <property type="project" value="UniProtKB-UniRule"/>
</dbReference>
<dbReference type="GO" id="GO:0006281">
    <property type="term" value="P:DNA repair"/>
    <property type="evidence" value="ECO:0007669"/>
    <property type="project" value="TreeGrafter"/>
</dbReference>
<dbReference type="GO" id="GO:0006261">
    <property type="term" value="P:DNA-templated DNA replication"/>
    <property type="evidence" value="ECO:0007669"/>
    <property type="project" value="TreeGrafter"/>
</dbReference>
<dbReference type="CDD" id="cd00009">
    <property type="entry name" value="AAA"/>
    <property type="match status" value="1"/>
</dbReference>
<dbReference type="CDD" id="cd18140">
    <property type="entry name" value="HLD_clamp_RFC"/>
    <property type="match status" value="1"/>
</dbReference>
<dbReference type="FunFam" id="1.20.272.10:FF:000029">
    <property type="entry name" value="Replication factor C small subunit"/>
    <property type="match status" value="1"/>
</dbReference>
<dbReference type="FunFam" id="3.40.50.300:FF:000129">
    <property type="entry name" value="Replication factor C subunit 5"/>
    <property type="match status" value="1"/>
</dbReference>
<dbReference type="Gene3D" id="1.10.8.60">
    <property type="match status" value="1"/>
</dbReference>
<dbReference type="Gene3D" id="1.20.272.10">
    <property type="match status" value="1"/>
</dbReference>
<dbReference type="Gene3D" id="3.40.50.300">
    <property type="entry name" value="P-loop containing nucleotide triphosphate hydrolases"/>
    <property type="match status" value="1"/>
</dbReference>
<dbReference type="HAMAP" id="MF_01509">
    <property type="entry name" value="RfcS"/>
    <property type="match status" value="1"/>
</dbReference>
<dbReference type="InterPro" id="IPR003593">
    <property type="entry name" value="AAA+_ATPase"/>
</dbReference>
<dbReference type="InterPro" id="IPR003959">
    <property type="entry name" value="ATPase_AAA_core"/>
</dbReference>
<dbReference type="InterPro" id="IPR008921">
    <property type="entry name" value="DNA_pol3_clamp-load_cplx_C"/>
</dbReference>
<dbReference type="InterPro" id="IPR050238">
    <property type="entry name" value="DNA_Rep/Repair_Clamp_Loader"/>
</dbReference>
<dbReference type="InterPro" id="IPR027417">
    <property type="entry name" value="P-loop_NTPase"/>
</dbReference>
<dbReference type="InterPro" id="IPR023748">
    <property type="entry name" value="Rep_factor-C_ssu_arc"/>
</dbReference>
<dbReference type="InterPro" id="IPR013748">
    <property type="entry name" value="Rep_factorC_C"/>
</dbReference>
<dbReference type="InterPro" id="IPR047854">
    <property type="entry name" value="RFC_lid"/>
</dbReference>
<dbReference type="NCBIfam" id="NF001679">
    <property type="entry name" value="PRK00440.1"/>
    <property type="match status" value="1"/>
</dbReference>
<dbReference type="PANTHER" id="PTHR11669">
    <property type="entry name" value="REPLICATION FACTOR C / DNA POLYMERASE III GAMMA-TAU SUBUNIT"/>
    <property type="match status" value="1"/>
</dbReference>
<dbReference type="PANTHER" id="PTHR11669:SF20">
    <property type="entry name" value="REPLICATION FACTOR C SUBUNIT 4"/>
    <property type="match status" value="1"/>
</dbReference>
<dbReference type="Pfam" id="PF00004">
    <property type="entry name" value="AAA"/>
    <property type="match status" value="1"/>
</dbReference>
<dbReference type="Pfam" id="PF21960">
    <property type="entry name" value="RCF1-5-like_lid"/>
    <property type="match status" value="1"/>
</dbReference>
<dbReference type="Pfam" id="PF08542">
    <property type="entry name" value="Rep_fac_C"/>
    <property type="match status" value="1"/>
</dbReference>
<dbReference type="SMART" id="SM00382">
    <property type="entry name" value="AAA"/>
    <property type="match status" value="1"/>
</dbReference>
<dbReference type="SUPFAM" id="SSF52540">
    <property type="entry name" value="P-loop containing nucleoside triphosphate hydrolases"/>
    <property type="match status" value="1"/>
</dbReference>
<dbReference type="SUPFAM" id="SSF48019">
    <property type="entry name" value="post-AAA+ oligomerization domain-like"/>
    <property type="match status" value="1"/>
</dbReference>
<reference key="1">
    <citation type="submission" date="2007-04" db="EMBL/GenBank/DDBJ databases">
        <title>Complete sequence of Pyrobaculum arsenaticum DSM 13514.</title>
        <authorList>
            <consortium name="US DOE Joint Genome Institute"/>
            <person name="Copeland A."/>
            <person name="Lucas S."/>
            <person name="Lapidus A."/>
            <person name="Barry K."/>
            <person name="Glavina del Rio T."/>
            <person name="Dalin E."/>
            <person name="Tice H."/>
            <person name="Pitluck S."/>
            <person name="Chain P."/>
            <person name="Malfatti S."/>
            <person name="Shin M."/>
            <person name="Vergez L."/>
            <person name="Schmutz J."/>
            <person name="Larimer F."/>
            <person name="Land M."/>
            <person name="Hauser L."/>
            <person name="Kyrpides N."/>
            <person name="Mikhailova N."/>
            <person name="Cozen A.E."/>
            <person name="Fitz-Gibbon S.T."/>
            <person name="House C.H."/>
            <person name="Saltikov C."/>
            <person name="Lowe T.M."/>
            <person name="Richardson P."/>
        </authorList>
    </citation>
    <scope>NUCLEOTIDE SEQUENCE [LARGE SCALE GENOMIC DNA]</scope>
    <source>
        <strain>ATCC 700994 / DSM 13514 / JCM 11321 / PZ6</strain>
    </source>
</reference>
<gene>
    <name evidence="1" type="primary">rfcS1</name>
    <name type="ordered locus">Pars_0002</name>
</gene>
<organism>
    <name type="scientific">Pyrobaculum arsenaticum (strain DSM 13514 / JCM 11321 / PZ6)</name>
    <dbReference type="NCBI Taxonomy" id="340102"/>
    <lineage>
        <taxon>Archaea</taxon>
        <taxon>Thermoproteota</taxon>
        <taxon>Thermoprotei</taxon>
        <taxon>Thermoproteales</taxon>
        <taxon>Thermoproteaceae</taxon>
        <taxon>Pyrobaculum</taxon>
    </lineage>
</organism>
<proteinExistence type="inferred from homology"/>